<accession>Q3YY95</accession>
<proteinExistence type="inferred from homology"/>
<comment type="function">
    <text evidence="1">Component of the sulfite reductase complex that catalyzes the 6-electron reduction of sulfite to sulfide. This is one of several activities required for the biosynthesis of L-cysteine from sulfate.</text>
</comment>
<comment type="catalytic activity">
    <reaction evidence="1">
        <text>hydrogen sulfide + 3 NADP(+) + 3 H2O = sulfite + 3 NADPH + 4 H(+)</text>
        <dbReference type="Rhea" id="RHEA:13801"/>
        <dbReference type="ChEBI" id="CHEBI:15377"/>
        <dbReference type="ChEBI" id="CHEBI:15378"/>
        <dbReference type="ChEBI" id="CHEBI:17359"/>
        <dbReference type="ChEBI" id="CHEBI:29919"/>
        <dbReference type="ChEBI" id="CHEBI:57783"/>
        <dbReference type="ChEBI" id="CHEBI:58349"/>
        <dbReference type="EC" id="1.8.1.2"/>
    </reaction>
</comment>
<comment type="cofactor">
    <cofactor evidence="1">
        <name>siroheme</name>
        <dbReference type="ChEBI" id="CHEBI:60052"/>
    </cofactor>
    <text evidence="1">Binds 1 siroheme per subunit.</text>
</comment>
<comment type="cofactor">
    <cofactor evidence="1">
        <name>[4Fe-4S] cluster</name>
        <dbReference type="ChEBI" id="CHEBI:49883"/>
    </cofactor>
    <text evidence="1">Binds 1 [4Fe-4S] cluster per subunit.</text>
</comment>
<comment type="pathway">
    <text evidence="1">Sulfur metabolism; hydrogen sulfide biosynthesis; hydrogen sulfide from sulfite (NADPH route): step 1/1.</text>
</comment>
<comment type="subunit">
    <text evidence="1">Alpha(8)-beta(8). The alpha component is a flavoprotein, the beta component is a hemoprotein.</text>
</comment>
<comment type="similarity">
    <text evidence="1">Belongs to the nitrite and sulfite reductase 4Fe-4S domain family.</text>
</comment>
<feature type="chain" id="PRO_1000068778" description="Sulfite reductase [NADPH] hemoprotein beta-component">
    <location>
        <begin position="1"/>
        <end position="570"/>
    </location>
</feature>
<feature type="binding site" evidence="1">
    <location>
        <position position="434"/>
    </location>
    <ligand>
        <name>[4Fe-4S] cluster</name>
        <dbReference type="ChEBI" id="CHEBI:49883"/>
    </ligand>
</feature>
<feature type="binding site" evidence="1">
    <location>
        <position position="440"/>
    </location>
    <ligand>
        <name>[4Fe-4S] cluster</name>
        <dbReference type="ChEBI" id="CHEBI:49883"/>
    </ligand>
</feature>
<feature type="binding site" evidence="1">
    <location>
        <position position="479"/>
    </location>
    <ligand>
        <name>[4Fe-4S] cluster</name>
        <dbReference type="ChEBI" id="CHEBI:49883"/>
    </ligand>
</feature>
<feature type="binding site" evidence="1">
    <location>
        <position position="483"/>
    </location>
    <ligand>
        <name>[4Fe-4S] cluster</name>
        <dbReference type="ChEBI" id="CHEBI:49883"/>
    </ligand>
</feature>
<feature type="binding site" description="axial binding residue" evidence="1">
    <location>
        <position position="483"/>
    </location>
    <ligand>
        <name>siroheme</name>
        <dbReference type="ChEBI" id="CHEBI:60052"/>
    </ligand>
    <ligandPart>
        <name>Fe</name>
        <dbReference type="ChEBI" id="CHEBI:18248"/>
    </ligandPart>
</feature>
<gene>
    <name evidence="1" type="primary">cysI</name>
    <name type="ordered locus">SSON_2916</name>
</gene>
<protein>
    <recommendedName>
        <fullName evidence="1">Sulfite reductase [NADPH] hemoprotein beta-component</fullName>
        <shortName evidence="1">SiR-HP</shortName>
        <shortName evidence="1">SiRHP</shortName>
        <ecNumber evidence="1">1.8.1.2</ecNumber>
    </recommendedName>
</protein>
<sequence length="570" mass="63990">MSEKHPGPLVVEGKLTDAERMKLESNYLRGTIAEDLNDGLTGGFKGDNFLLIRFHGMYQQDDRDIRAERAEQKLEPRHAMLLRCRLPGGVITTKQWQAIDKFAGENTIYGSIRLTNRQTFQFHGILKKNVKPVHQMLHSVGLDALATANDMNRNVLCTSNPYESQLHAEAYEWAKKISEHLLPRTRAYAEIWLDQEKVATTDEEPILGQTYLPRKFKTTVVIPPQNDIDLHANDMNFVAIAENGKLVGFNLLVGGGLSIEHGNKKTYARTASEFGYLPLEHTLAVAEAVVTTQRDWGNRTDRKNAKTKYTLERVGVETFKAEVERRAGIKFEPIRPYEFTGRGDRIGWVKGIDDNWHLTLFIENGRILDYPGRPLKTGLLEIAKIHKGDFRITANQNLIITGVPESEKAKIEKIAKESGLMNAVTPQRENSMACVSFPTCPLAMAEAERFLPSFIDNIDNLMAKHGVSDEHIVMRVTGCPNGCGRAMLAEVGLVGKAPGRYNLHLGGNRIGTRIPRMYKENITEPEILASLDELIGRWAKEREAGEGFGDFTVRAGIIRPVLDPARDLWD</sequence>
<evidence type="ECO:0000255" key="1">
    <source>
        <dbReference type="HAMAP-Rule" id="MF_01540"/>
    </source>
</evidence>
<reference key="1">
    <citation type="journal article" date="2005" name="Nucleic Acids Res.">
        <title>Genome dynamics and diversity of Shigella species, the etiologic agents of bacillary dysentery.</title>
        <authorList>
            <person name="Yang F."/>
            <person name="Yang J."/>
            <person name="Zhang X."/>
            <person name="Chen L."/>
            <person name="Jiang Y."/>
            <person name="Yan Y."/>
            <person name="Tang X."/>
            <person name="Wang J."/>
            <person name="Xiong Z."/>
            <person name="Dong J."/>
            <person name="Xue Y."/>
            <person name="Zhu Y."/>
            <person name="Xu X."/>
            <person name="Sun L."/>
            <person name="Chen S."/>
            <person name="Nie H."/>
            <person name="Peng J."/>
            <person name="Xu J."/>
            <person name="Wang Y."/>
            <person name="Yuan Z."/>
            <person name="Wen Y."/>
            <person name="Yao Z."/>
            <person name="Shen Y."/>
            <person name="Qiang B."/>
            <person name="Hou Y."/>
            <person name="Yu J."/>
            <person name="Jin Q."/>
        </authorList>
    </citation>
    <scope>NUCLEOTIDE SEQUENCE [LARGE SCALE GENOMIC DNA]</scope>
    <source>
        <strain>Ss046</strain>
    </source>
</reference>
<name>CYSI_SHISS</name>
<dbReference type="EC" id="1.8.1.2" evidence="1"/>
<dbReference type="EMBL" id="CP000038">
    <property type="protein sequence ID" value="AAZ89517.1"/>
    <property type="molecule type" value="Genomic_DNA"/>
</dbReference>
<dbReference type="RefSeq" id="WP_001290716.1">
    <property type="nucleotide sequence ID" value="NC_007384.1"/>
</dbReference>
<dbReference type="SMR" id="Q3YY95"/>
<dbReference type="GeneID" id="93779240"/>
<dbReference type="KEGG" id="ssn:SSON_2916"/>
<dbReference type="HOGENOM" id="CLU_001975_3_2_6"/>
<dbReference type="UniPathway" id="UPA00140">
    <property type="reaction ID" value="UER00207"/>
</dbReference>
<dbReference type="Proteomes" id="UP000002529">
    <property type="component" value="Chromosome"/>
</dbReference>
<dbReference type="GO" id="GO:0009337">
    <property type="term" value="C:sulfite reductase complex (NADPH)"/>
    <property type="evidence" value="ECO:0007669"/>
    <property type="project" value="InterPro"/>
</dbReference>
<dbReference type="GO" id="GO:0051539">
    <property type="term" value="F:4 iron, 4 sulfur cluster binding"/>
    <property type="evidence" value="ECO:0007669"/>
    <property type="project" value="UniProtKB-KW"/>
</dbReference>
<dbReference type="GO" id="GO:0020037">
    <property type="term" value="F:heme binding"/>
    <property type="evidence" value="ECO:0007669"/>
    <property type="project" value="InterPro"/>
</dbReference>
<dbReference type="GO" id="GO:0046872">
    <property type="term" value="F:metal ion binding"/>
    <property type="evidence" value="ECO:0007669"/>
    <property type="project" value="UniProtKB-KW"/>
</dbReference>
<dbReference type="GO" id="GO:0050661">
    <property type="term" value="F:NADP binding"/>
    <property type="evidence" value="ECO:0007669"/>
    <property type="project" value="InterPro"/>
</dbReference>
<dbReference type="GO" id="GO:0050311">
    <property type="term" value="F:sulfite reductase (ferredoxin) activity"/>
    <property type="evidence" value="ECO:0007669"/>
    <property type="project" value="TreeGrafter"/>
</dbReference>
<dbReference type="GO" id="GO:0004783">
    <property type="term" value="F:sulfite reductase (NADPH) activity"/>
    <property type="evidence" value="ECO:0007669"/>
    <property type="project" value="UniProtKB-UniRule"/>
</dbReference>
<dbReference type="GO" id="GO:0019344">
    <property type="term" value="P:cysteine biosynthetic process"/>
    <property type="evidence" value="ECO:0007669"/>
    <property type="project" value="UniProtKB-KW"/>
</dbReference>
<dbReference type="GO" id="GO:0070814">
    <property type="term" value="P:hydrogen sulfide biosynthetic process"/>
    <property type="evidence" value="ECO:0007669"/>
    <property type="project" value="UniProtKB-UniRule"/>
</dbReference>
<dbReference type="GO" id="GO:0000103">
    <property type="term" value="P:sulfate assimilation"/>
    <property type="evidence" value="ECO:0007669"/>
    <property type="project" value="UniProtKB-UniRule"/>
</dbReference>
<dbReference type="FunFam" id="3.30.413.10:FF:000003">
    <property type="entry name" value="Sulfite reductase [NADPH] hemoprotein beta-component"/>
    <property type="match status" value="1"/>
</dbReference>
<dbReference type="FunFam" id="3.30.413.10:FF:000004">
    <property type="entry name" value="Sulfite reductase [NADPH] hemoprotein beta-component"/>
    <property type="match status" value="1"/>
</dbReference>
<dbReference type="Gene3D" id="3.30.413.10">
    <property type="entry name" value="Sulfite Reductase Hemoprotein, domain 1"/>
    <property type="match status" value="2"/>
</dbReference>
<dbReference type="HAMAP" id="MF_01540">
    <property type="entry name" value="CysI"/>
    <property type="match status" value="1"/>
</dbReference>
<dbReference type="InterPro" id="IPR011786">
    <property type="entry name" value="CysI"/>
</dbReference>
<dbReference type="InterPro" id="IPR005117">
    <property type="entry name" value="NiRdtase/SiRdtase_haem-b_fer"/>
</dbReference>
<dbReference type="InterPro" id="IPR036136">
    <property type="entry name" value="Nit/Sulf_reduc_fer-like_dom_sf"/>
</dbReference>
<dbReference type="InterPro" id="IPR006067">
    <property type="entry name" value="NO2/SO3_Rdtase_4Fe4S_dom"/>
</dbReference>
<dbReference type="InterPro" id="IPR045169">
    <property type="entry name" value="NO2/SO3_Rdtase_4Fe4S_prot"/>
</dbReference>
<dbReference type="InterPro" id="IPR045854">
    <property type="entry name" value="NO2/SO3_Rdtase_4Fe4S_sf"/>
</dbReference>
<dbReference type="InterPro" id="IPR006066">
    <property type="entry name" value="NO2/SO3_Rdtase_FeS/sirohaem_BS"/>
</dbReference>
<dbReference type="NCBIfam" id="TIGR02041">
    <property type="entry name" value="CysI"/>
    <property type="match status" value="1"/>
</dbReference>
<dbReference type="NCBIfam" id="NF010029">
    <property type="entry name" value="PRK13504.1"/>
    <property type="match status" value="1"/>
</dbReference>
<dbReference type="PANTHER" id="PTHR11493:SF47">
    <property type="entry name" value="SULFITE REDUCTASE [NADPH] SUBUNIT BETA"/>
    <property type="match status" value="1"/>
</dbReference>
<dbReference type="PANTHER" id="PTHR11493">
    <property type="entry name" value="SULFITE REDUCTASE [NADPH] SUBUNIT BETA-RELATED"/>
    <property type="match status" value="1"/>
</dbReference>
<dbReference type="Pfam" id="PF01077">
    <property type="entry name" value="NIR_SIR"/>
    <property type="match status" value="1"/>
</dbReference>
<dbReference type="Pfam" id="PF03460">
    <property type="entry name" value="NIR_SIR_ferr"/>
    <property type="match status" value="2"/>
</dbReference>
<dbReference type="PRINTS" id="PR00397">
    <property type="entry name" value="SIROHAEM"/>
</dbReference>
<dbReference type="SUPFAM" id="SSF56014">
    <property type="entry name" value="Nitrite and sulphite reductase 4Fe-4S domain-like"/>
    <property type="match status" value="2"/>
</dbReference>
<dbReference type="SUPFAM" id="SSF55124">
    <property type="entry name" value="Nitrite/Sulfite reductase N-terminal domain-like"/>
    <property type="match status" value="2"/>
</dbReference>
<dbReference type="PROSITE" id="PS00365">
    <property type="entry name" value="NIR_SIR"/>
    <property type="match status" value="1"/>
</dbReference>
<organism>
    <name type="scientific">Shigella sonnei (strain Ss046)</name>
    <dbReference type="NCBI Taxonomy" id="300269"/>
    <lineage>
        <taxon>Bacteria</taxon>
        <taxon>Pseudomonadati</taxon>
        <taxon>Pseudomonadota</taxon>
        <taxon>Gammaproteobacteria</taxon>
        <taxon>Enterobacterales</taxon>
        <taxon>Enterobacteriaceae</taxon>
        <taxon>Shigella</taxon>
    </lineage>
</organism>
<keyword id="KW-0004">4Fe-4S</keyword>
<keyword id="KW-0028">Amino-acid biosynthesis</keyword>
<keyword id="KW-0198">Cysteine biosynthesis</keyword>
<keyword id="KW-0349">Heme</keyword>
<keyword id="KW-0408">Iron</keyword>
<keyword id="KW-0411">Iron-sulfur</keyword>
<keyword id="KW-0479">Metal-binding</keyword>
<keyword id="KW-0521">NADP</keyword>
<keyword id="KW-0560">Oxidoreductase</keyword>
<keyword id="KW-1185">Reference proteome</keyword>